<feature type="chain" id="PRO_0000428031" description="Chorismate pyruvate-lyase">
    <location>
        <begin position="1"/>
        <end position="199"/>
    </location>
</feature>
<comment type="function">
    <text evidence="1">Removes the pyruvyl group from chorismate to provide 4-hydroxybenzoate (4HB). Involved in the synthesis of glycosylated p-hydroxybenzoic acid methyl esters (p-HBADs) and phenolic glycolipids (PGL) that play important roles in the pathogenesis of mycobacterial infections (By similarity).</text>
</comment>
<comment type="catalytic activity">
    <reaction>
        <text>chorismate = 4-hydroxybenzoate + pyruvate</text>
        <dbReference type="Rhea" id="RHEA:16505"/>
        <dbReference type="ChEBI" id="CHEBI:15361"/>
        <dbReference type="ChEBI" id="CHEBI:17879"/>
        <dbReference type="ChEBI" id="CHEBI:29748"/>
        <dbReference type="EC" id="4.1.3.40"/>
    </reaction>
</comment>
<comment type="similarity">
    <text evidence="2">Belongs to the chorismate pyruvate-lyase type 2 family.</text>
</comment>
<comment type="sequence caution" evidence="2">
    <conflict type="erroneous initiation">
        <sequence resource="EMBL-CDS" id="AAK47348"/>
    </conflict>
</comment>
<sequence>MTECFLSDQEIRKLNRDLRILIAANGTLTRVLNIVADDEVIVQIVKQRIHDVSPKLSEFEQLGQVGVGRVLQRYIILKGRNSEHLFVAAESLIAIDRLPAAIITRLTQTNDPLGEVMAASHIETFKEEAKVWVGDLPGWLALHGYQNSRKRAVARRYRVISGGQPIMVVTEHFLRSVFRDAPHEEPDRWQFSNAITLAR</sequence>
<keyword id="KW-0456">Lyase</keyword>
<keyword id="KW-1185">Reference proteome</keyword>
<protein>
    <recommendedName>
        <fullName>Chorismate pyruvate-lyase</fullName>
        <ecNumber>4.1.3.40</ecNumber>
    </recommendedName>
    <alternativeName>
        <fullName>4-HB synthase</fullName>
    </alternativeName>
    <alternativeName>
        <fullName>p-hydroxybenzoic acid synthase</fullName>
    </alternativeName>
</protein>
<gene>
    <name type="ordered locus">MT3022</name>
</gene>
<organism>
    <name type="scientific">Mycobacterium tuberculosis (strain CDC 1551 / Oshkosh)</name>
    <dbReference type="NCBI Taxonomy" id="83331"/>
    <lineage>
        <taxon>Bacteria</taxon>
        <taxon>Bacillati</taxon>
        <taxon>Actinomycetota</taxon>
        <taxon>Actinomycetes</taxon>
        <taxon>Mycobacteriales</taxon>
        <taxon>Mycobacteriaceae</taxon>
        <taxon>Mycobacterium</taxon>
        <taxon>Mycobacterium tuberculosis complex</taxon>
    </lineage>
</organism>
<dbReference type="EC" id="4.1.3.40"/>
<dbReference type="EMBL" id="AE000516">
    <property type="protein sequence ID" value="AAK47348.1"/>
    <property type="status" value="ALT_INIT"/>
    <property type="molecule type" value="Genomic_DNA"/>
</dbReference>
<dbReference type="PIR" id="B70669">
    <property type="entry name" value="B70669"/>
</dbReference>
<dbReference type="RefSeq" id="WP_003414887.1">
    <property type="nucleotide sequence ID" value="NZ_KK341227.1"/>
</dbReference>
<dbReference type="SMR" id="P9WIC4"/>
<dbReference type="KEGG" id="mtc:MT3022"/>
<dbReference type="HOGENOM" id="CLU_107938_1_0_11"/>
<dbReference type="Proteomes" id="UP000001020">
    <property type="component" value="Chromosome"/>
</dbReference>
<dbReference type="GO" id="GO:0008813">
    <property type="term" value="F:chorismate lyase activity"/>
    <property type="evidence" value="ECO:0007669"/>
    <property type="project" value="UniProtKB-EC"/>
</dbReference>
<dbReference type="FunFam" id="3.40.1410.10:FF:000020">
    <property type="entry name" value="Chorismate pyruvate-lyase"/>
    <property type="match status" value="1"/>
</dbReference>
<dbReference type="Gene3D" id="3.40.1410.10">
    <property type="entry name" value="Chorismate lyase-like"/>
    <property type="match status" value="1"/>
</dbReference>
<dbReference type="InterPro" id="IPR028978">
    <property type="entry name" value="Chorismate_lyase_/UTRA_dom_sf"/>
</dbReference>
<dbReference type="InterPro" id="IPR002800">
    <property type="entry name" value="Rv2949c-like"/>
</dbReference>
<dbReference type="Pfam" id="PF01947">
    <property type="entry name" value="Rv2949c-like"/>
    <property type="match status" value="1"/>
</dbReference>
<dbReference type="SUPFAM" id="SSF64288">
    <property type="entry name" value="Chorismate lyase-like"/>
    <property type="match status" value="1"/>
</dbReference>
<name>PHBS_MYCTO</name>
<proteinExistence type="inferred from homology"/>
<evidence type="ECO:0000250" key="1"/>
<evidence type="ECO:0000305" key="2"/>
<reference key="1">
    <citation type="journal article" date="2002" name="J. Bacteriol.">
        <title>Whole-genome comparison of Mycobacterium tuberculosis clinical and laboratory strains.</title>
        <authorList>
            <person name="Fleischmann R.D."/>
            <person name="Alland D."/>
            <person name="Eisen J.A."/>
            <person name="Carpenter L."/>
            <person name="White O."/>
            <person name="Peterson J.D."/>
            <person name="DeBoy R.T."/>
            <person name="Dodson R.J."/>
            <person name="Gwinn M.L."/>
            <person name="Haft D.H."/>
            <person name="Hickey E.K."/>
            <person name="Kolonay J.F."/>
            <person name="Nelson W.C."/>
            <person name="Umayam L.A."/>
            <person name="Ermolaeva M.D."/>
            <person name="Salzberg S.L."/>
            <person name="Delcher A."/>
            <person name="Utterback T.R."/>
            <person name="Weidman J.F."/>
            <person name="Khouri H.M."/>
            <person name="Gill J."/>
            <person name="Mikula A."/>
            <person name="Bishai W."/>
            <person name="Jacobs W.R. Jr."/>
            <person name="Venter J.C."/>
            <person name="Fraser C.M."/>
        </authorList>
    </citation>
    <scope>NUCLEOTIDE SEQUENCE [LARGE SCALE GENOMIC DNA]</scope>
    <source>
        <strain>CDC 1551 / Oshkosh</strain>
    </source>
</reference>
<accession>P9WIC4</accession>
<accession>L0TDV5</accession>
<accession>O86325</accession>
<accession>Q7D6D8</accession>